<keyword id="KW-0963">Cytoplasm</keyword>
<keyword id="KW-0342">GTP-binding</keyword>
<keyword id="KW-0436">Ligase</keyword>
<keyword id="KW-0460">Magnesium</keyword>
<keyword id="KW-0479">Metal-binding</keyword>
<keyword id="KW-0547">Nucleotide-binding</keyword>
<keyword id="KW-0658">Purine biosynthesis</keyword>
<keyword id="KW-1185">Reference proteome</keyword>
<evidence type="ECO:0000255" key="1">
    <source>
        <dbReference type="HAMAP-Rule" id="MF_00011"/>
    </source>
</evidence>
<reference key="1">
    <citation type="journal article" date="2003" name="Proc. Natl. Acad. Sci. U.S.A.">
        <title>The genome sequence of Blochmannia floridanus: comparative analysis of reduced genomes.</title>
        <authorList>
            <person name="Gil R."/>
            <person name="Silva F.J."/>
            <person name="Zientz E."/>
            <person name="Delmotte F."/>
            <person name="Gonzalez-Candelas F."/>
            <person name="Latorre A."/>
            <person name="Rausell C."/>
            <person name="Kamerbeek J."/>
            <person name="Gadau J."/>
            <person name="Hoelldobler B."/>
            <person name="van Ham R.C.H.J."/>
            <person name="Gross R."/>
            <person name="Moya A."/>
        </authorList>
    </citation>
    <scope>NUCLEOTIDE SEQUENCE [LARGE SCALE GENOMIC DNA]</scope>
</reference>
<accession>Q7VQP1</accession>
<feature type="chain" id="PRO_0000095162" description="Adenylosuccinate synthetase">
    <location>
        <begin position="1"/>
        <end position="438"/>
    </location>
</feature>
<feature type="active site" description="Proton acceptor" evidence="1">
    <location>
        <position position="14"/>
    </location>
</feature>
<feature type="active site" description="Proton donor" evidence="1">
    <location>
        <position position="42"/>
    </location>
</feature>
<feature type="binding site" evidence="1">
    <location>
        <begin position="13"/>
        <end position="19"/>
    </location>
    <ligand>
        <name>GTP</name>
        <dbReference type="ChEBI" id="CHEBI:37565"/>
    </ligand>
</feature>
<feature type="binding site" description="in other chain" evidence="1">
    <location>
        <begin position="14"/>
        <end position="17"/>
    </location>
    <ligand>
        <name>IMP</name>
        <dbReference type="ChEBI" id="CHEBI:58053"/>
        <note>ligand shared between dimeric partners</note>
    </ligand>
</feature>
<feature type="binding site" evidence="1">
    <location>
        <position position="14"/>
    </location>
    <ligand>
        <name>Mg(2+)</name>
        <dbReference type="ChEBI" id="CHEBI:18420"/>
    </ligand>
</feature>
<feature type="binding site" description="in other chain" evidence="1">
    <location>
        <begin position="39"/>
        <end position="42"/>
    </location>
    <ligand>
        <name>IMP</name>
        <dbReference type="ChEBI" id="CHEBI:58053"/>
        <note>ligand shared between dimeric partners</note>
    </ligand>
</feature>
<feature type="binding site" evidence="1">
    <location>
        <begin position="41"/>
        <end position="43"/>
    </location>
    <ligand>
        <name>GTP</name>
        <dbReference type="ChEBI" id="CHEBI:37565"/>
    </ligand>
</feature>
<feature type="binding site" evidence="1">
    <location>
        <position position="41"/>
    </location>
    <ligand>
        <name>Mg(2+)</name>
        <dbReference type="ChEBI" id="CHEBI:18420"/>
    </ligand>
</feature>
<feature type="binding site" description="in other chain" evidence="1">
    <location>
        <position position="136"/>
    </location>
    <ligand>
        <name>IMP</name>
        <dbReference type="ChEBI" id="CHEBI:58053"/>
        <note>ligand shared between dimeric partners</note>
    </ligand>
</feature>
<feature type="binding site" evidence="1">
    <location>
        <position position="150"/>
    </location>
    <ligand>
        <name>IMP</name>
        <dbReference type="ChEBI" id="CHEBI:58053"/>
        <note>ligand shared between dimeric partners</note>
    </ligand>
</feature>
<feature type="binding site" description="in other chain" evidence="1">
    <location>
        <position position="231"/>
    </location>
    <ligand>
        <name>IMP</name>
        <dbReference type="ChEBI" id="CHEBI:58053"/>
        <note>ligand shared between dimeric partners</note>
    </ligand>
</feature>
<feature type="binding site" description="in other chain" evidence="1">
    <location>
        <position position="246"/>
    </location>
    <ligand>
        <name>IMP</name>
        <dbReference type="ChEBI" id="CHEBI:58053"/>
        <note>ligand shared between dimeric partners</note>
    </ligand>
</feature>
<feature type="binding site" evidence="1">
    <location>
        <begin position="306"/>
        <end position="312"/>
    </location>
    <ligand>
        <name>substrate</name>
    </ligand>
</feature>
<feature type="binding site" description="in other chain" evidence="1">
    <location>
        <position position="310"/>
    </location>
    <ligand>
        <name>IMP</name>
        <dbReference type="ChEBI" id="CHEBI:58053"/>
        <note>ligand shared between dimeric partners</note>
    </ligand>
</feature>
<feature type="binding site" evidence="1">
    <location>
        <position position="312"/>
    </location>
    <ligand>
        <name>GTP</name>
        <dbReference type="ChEBI" id="CHEBI:37565"/>
    </ligand>
</feature>
<feature type="binding site" evidence="1">
    <location>
        <begin position="338"/>
        <end position="340"/>
    </location>
    <ligand>
        <name>GTP</name>
        <dbReference type="ChEBI" id="CHEBI:37565"/>
    </ligand>
</feature>
<feature type="binding site" evidence="1">
    <location>
        <begin position="421"/>
        <end position="423"/>
    </location>
    <ligand>
        <name>GTP</name>
        <dbReference type="ChEBI" id="CHEBI:37565"/>
    </ligand>
</feature>
<dbReference type="EC" id="6.3.4.4" evidence="1"/>
<dbReference type="EMBL" id="BX248583">
    <property type="protein sequence ID" value="CAD83606.1"/>
    <property type="molecule type" value="Genomic_DNA"/>
</dbReference>
<dbReference type="SMR" id="Q7VQP1"/>
<dbReference type="STRING" id="203907.Bfl083"/>
<dbReference type="KEGG" id="bfl:Bfl083"/>
<dbReference type="eggNOG" id="COG0104">
    <property type="taxonomic scope" value="Bacteria"/>
</dbReference>
<dbReference type="HOGENOM" id="CLU_029848_0_0_6"/>
<dbReference type="OrthoDB" id="9807553at2"/>
<dbReference type="UniPathway" id="UPA00075">
    <property type="reaction ID" value="UER00335"/>
</dbReference>
<dbReference type="Proteomes" id="UP000002192">
    <property type="component" value="Chromosome"/>
</dbReference>
<dbReference type="GO" id="GO:0005737">
    <property type="term" value="C:cytoplasm"/>
    <property type="evidence" value="ECO:0007669"/>
    <property type="project" value="UniProtKB-SubCell"/>
</dbReference>
<dbReference type="GO" id="GO:0004019">
    <property type="term" value="F:adenylosuccinate synthase activity"/>
    <property type="evidence" value="ECO:0007669"/>
    <property type="project" value="UniProtKB-UniRule"/>
</dbReference>
<dbReference type="GO" id="GO:0005525">
    <property type="term" value="F:GTP binding"/>
    <property type="evidence" value="ECO:0007669"/>
    <property type="project" value="UniProtKB-UniRule"/>
</dbReference>
<dbReference type="GO" id="GO:0000287">
    <property type="term" value="F:magnesium ion binding"/>
    <property type="evidence" value="ECO:0007669"/>
    <property type="project" value="UniProtKB-UniRule"/>
</dbReference>
<dbReference type="GO" id="GO:0044208">
    <property type="term" value="P:'de novo' AMP biosynthetic process"/>
    <property type="evidence" value="ECO:0007669"/>
    <property type="project" value="UniProtKB-UniRule"/>
</dbReference>
<dbReference type="GO" id="GO:0046040">
    <property type="term" value="P:IMP metabolic process"/>
    <property type="evidence" value="ECO:0007669"/>
    <property type="project" value="TreeGrafter"/>
</dbReference>
<dbReference type="CDD" id="cd03108">
    <property type="entry name" value="AdSS"/>
    <property type="match status" value="1"/>
</dbReference>
<dbReference type="FunFam" id="1.10.300.10:FF:000001">
    <property type="entry name" value="Adenylosuccinate synthetase"/>
    <property type="match status" value="1"/>
</dbReference>
<dbReference type="FunFam" id="3.90.170.10:FF:000001">
    <property type="entry name" value="Adenylosuccinate synthetase"/>
    <property type="match status" value="1"/>
</dbReference>
<dbReference type="Gene3D" id="3.40.440.10">
    <property type="entry name" value="Adenylosuccinate Synthetase, subunit A, domain 1"/>
    <property type="match status" value="1"/>
</dbReference>
<dbReference type="Gene3D" id="1.10.300.10">
    <property type="entry name" value="Adenylosuccinate Synthetase, subunit A, domain 2"/>
    <property type="match status" value="1"/>
</dbReference>
<dbReference type="Gene3D" id="3.90.170.10">
    <property type="entry name" value="Adenylosuccinate Synthetase, subunit A, domain 3"/>
    <property type="match status" value="1"/>
</dbReference>
<dbReference type="HAMAP" id="MF_00011">
    <property type="entry name" value="Adenylosucc_synth"/>
    <property type="match status" value="1"/>
</dbReference>
<dbReference type="InterPro" id="IPR018220">
    <property type="entry name" value="Adenylosuccin_syn_GTP-bd"/>
</dbReference>
<dbReference type="InterPro" id="IPR033128">
    <property type="entry name" value="Adenylosuccin_syn_Lys_AS"/>
</dbReference>
<dbReference type="InterPro" id="IPR042109">
    <property type="entry name" value="Adenylosuccinate_synth_dom1"/>
</dbReference>
<dbReference type="InterPro" id="IPR042110">
    <property type="entry name" value="Adenylosuccinate_synth_dom2"/>
</dbReference>
<dbReference type="InterPro" id="IPR042111">
    <property type="entry name" value="Adenylosuccinate_synth_dom3"/>
</dbReference>
<dbReference type="InterPro" id="IPR001114">
    <property type="entry name" value="Adenylosuccinate_synthetase"/>
</dbReference>
<dbReference type="InterPro" id="IPR027417">
    <property type="entry name" value="P-loop_NTPase"/>
</dbReference>
<dbReference type="NCBIfam" id="NF002223">
    <property type="entry name" value="PRK01117.1"/>
    <property type="match status" value="1"/>
</dbReference>
<dbReference type="NCBIfam" id="TIGR00184">
    <property type="entry name" value="purA"/>
    <property type="match status" value="1"/>
</dbReference>
<dbReference type="PANTHER" id="PTHR11846">
    <property type="entry name" value="ADENYLOSUCCINATE SYNTHETASE"/>
    <property type="match status" value="1"/>
</dbReference>
<dbReference type="PANTHER" id="PTHR11846:SF0">
    <property type="entry name" value="ADENYLOSUCCINATE SYNTHETASE"/>
    <property type="match status" value="1"/>
</dbReference>
<dbReference type="Pfam" id="PF00709">
    <property type="entry name" value="Adenylsucc_synt"/>
    <property type="match status" value="1"/>
</dbReference>
<dbReference type="SMART" id="SM00788">
    <property type="entry name" value="Adenylsucc_synt"/>
    <property type="match status" value="1"/>
</dbReference>
<dbReference type="SUPFAM" id="SSF52540">
    <property type="entry name" value="P-loop containing nucleoside triphosphate hydrolases"/>
    <property type="match status" value="1"/>
</dbReference>
<dbReference type="PROSITE" id="PS01266">
    <property type="entry name" value="ADENYLOSUCCIN_SYN_1"/>
    <property type="match status" value="1"/>
</dbReference>
<dbReference type="PROSITE" id="PS00513">
    <property type="entry name" value="ADENYLOSUCCIN_SYN_2"/>
    <property type="match status" value="1"/>
</dbReference>
<comment type="function">
    <text evidence="1">Plays an important role in the de novo pathway of purine nucleotide biosynthesis. Catalyzes the first committed step in the biosynthesis of AMP from IMP.</text>
</comment>
<comment type="catalytic activity">
    <reaction evidence="1">
        <text>IMP + L-aspartate + GTP = N(6)-(1,2-dicarboxyethyl)-AMP + GDP + phosphate + 2 H(+)</text>
        <dbReference type="Rhea" id="RHEA:15753"/>
        <dbReference type="ChEBI" id="CHEBI:15378"/>
        <dbReference type="ChEBI" id="CHEBI:29991"/>
        <dbReference type="ChEBI" id="CHEBI:37565"/>
        <dbReference type="ChEBI" id="CHEBI:43474"/>
        <dbReference type="ChEBI" id="CHEBI:57567"/>
        <dbReference type="ChEBI" id="CHEBI:58053"/>
        <dbReference type="ChEBI" id="CHEBI:58189"/>
        <dbReference type="EC" id="6.3.4.4"/>
    </reaction>
</comment>
<comment type="cofactor">
    <cofactor evidence="1">
        <name>Mg(2+)</name>
        <dbReference type="ChEBI" id="CHEBI:18420"/>
    </cofactor>
    <text evidence="1">Binds 1 Mg(2+) ion per subunit.</text>
</comment>
<comment type="pathway">
    <text evidence="1">Purine metabolism; AMP biosynthesis via de novo pathway; AMP from IMP: step 1/2.</text>
</comment>
<comment type="subunit">
    <text evidence="1">Homodimer.</text>
</comment>
<comment type="subcellular location">
    <subcellularLocation>
        <location evidence="1">Cytoplasm</location>
    </subcellularLocation>
</comment>
<comment type="similarity">
    <text evidence="1">Belongs to the adenylosuccinate synthetase family.</text>
</comment>
<sequence>MIQNIVIIGTQWGDEGKGKIIDFLTPQVQYVVRYQGGHNAGHTIVVNHKKVTLHLIPSGILHDNIINIIAGGVVLSPVILVKEIQKLKKINVLVDDRIFISESCSLILPYHIAIDLAREKISTTVITNNNVIIGTTGCGIGPAYEDKVARRALRVYDLYNLKNFENKLKNIADFYNFQLVQYYHAEPIDYHVVMDEIITVSDILIKKVIDVPELLLNARKRGDKIIFEGAQGSLLDIDHGTYPYVTSSHTTSGGAIVGIGVGPKYIDYVLGIMKAYSTRVGNGPFPTELSGDIAEWLCTRGQEFGSTTGRRRRTGWFDAVSVRHAIKISSINSACLTKIDILDGLKYVKICVAYQSFNGEIIYNFPYSLENLKNITPVYEVLPGWSGRTTGIKKFNQLPLEAKQYIKRIEEVIGIPIDIISTGPDRLMNIIVRNPLNF</sequence>
<proteinExistence type="inferred from homology"/>
<protein>
    <recommendedName>
        <fullName evidence="1">Adenylosuccinate synthetase</fullName>
        <shortName evidence="1">AMPSase</shortName>
        <shortName evidence="1">AdSS</shortName>
        <ecNumber evidence="1">6.3.4.4</ecNumber>
    </recommendedName>
    <alternativeName>
        <fullName evidence="1">IMP--aspartate ligase</fullName>
    </alternativeName>
</protein>
<organism>
    <name type="scientific">Blochmanniella floridana</name>
    <dbReference type="NCBI Taxonomy" id="203907"/>
    <lineage>
        <taxon>Bacteria</taxon>
        <taxon>Pseudomonadati</taxon>
        <taxon>Pseudomonadota</taxon>
        <taxon>Gammaproteobacteria</taxon>
        <taxon>Enterobacterales</taxon>
        <taxon>Enterobacteriaceae</taxon>
        <taxon>ant endosymbionts</taxon>
        <taxon>Candidatus Blochmanniella</taxon>
    </lineage>
</organism>
<gene>
    <name evidence="1" type="primary">purA</name>
    <name type="ordered locus">Bfl083</name>
</gene>
<name>PURA_BLOFL</name>